<name>GLYA_VEREI</name>
<keyword id="KW-0028">Amino-acid biosynthesis</keyword>
<keyword id="KW-0963">Cytoplasm</keyword>
<keyword id="KW-0554">One-carbon metabolism</keyword>
<keyword id="KW-0663">Pyridoxal phosphate</keyword>
<keyword id="KW-1185">Reference proteome</keyword>
<keyword id="KW-0808">Transferase</keyword>
<sequence>MYHRHLLVEQTDPELFAAIEAENARQEQHIELIASENYASPAVMWAQGTQLTNKYAEGYPGKRYYGGCEHVDVAEQLAIDRVKKLFGAEAANVQPHCGASANEAVFLAFLKPGDTIMGMSLAEGGHLTHGMSLNMSGKWFNAVSYGLDADEVIDYEAMEKKAHATRPRLIIAGASAYSLHIDFARFAQVAKDVGAIFMVDMAHYAGLIAAGLYPNPVPHADVVTSTTHKSLRGPRGGIILMRAAHEKAIHSAIFPGLQGGPLMHVIAAKAVAFQEALQPGFRLYQEQVLKNAKVLAQTLAARGLRIVSGGTQSHMMLVDLRAKGITGKEAEAVLGAAHMTINKNAIPNDPEKPMVTSGVRIGTPAMTTRGFKEEQARSTAELIADLLDKPRDAANIAAVRAKVDALTARFPVYG</sequence>
<organism>
    <name type="scientific">Verminephrobacter eiseniae (strain EF01-2)</name>
    <dbReference type="NCBI Taxonomy" id="391735"/>
    <lineage>
        <taxon>Bacteria</taxon>
        <taxon>Pseudomonadati</taxon>
        <taxon>Pseudomonadota</taxon>
        <taxon>Betaproteobacteria</taxon>
        <taxon>Burkholderiales</taxon>
        <taxon>Comamonadaceae</taxon>
        <taxon>Verminephrobacter</taxon>
    </lineage>
</organism>
<proteinExistence type="inferred from homology"/>
<protein>
    <recommendedName>
        <fullName evidence="1">Serine hydroxymethyltransferase</fullName>
        <shortName evidence="1">SHMT</shortName>
        <shortName evidence="1">Serine methylase</shortName>
        <ecNumber evidence="1">2.1.2.1</ecNumber>
    </recommendedName>
</protein>
<gene>
    <name evidence="1" type="primary">glyA</name>
    <name type="ordered locus">Veis_4246</name>
</gene>
<feature type="chain" id="PRO_0000369962" description="Serine hydroxymethyltransferase">
    <location>
        <begin position="1"/>
        <end position="414"/>
    </location>
</feature>
<feature type="binding site" evidence="1">
    <location>
        <position position="121"/>
    </location>
    <ligand>
        <name>(6S)-5,6,7,8-tetrahydrofolate</name>
        <dbReference type="ChEBI" id="CHEBI:57453"/>
    </ligand>
</feature>
<feature type="binding site" evidence="1">
    <location>
        <begin position="125"/>
        <end position="127"/>
    </location>
    <ligand>
        <name>(6S)-5,6,7,8-tetrahydrofolate</name>
        <dbReference type="ChEBI" id="CHEBI:57453"/>
    </ligand>
</feature>
<feature type="site" description="Plays an important role in substrate specificity" evidence="1">
    <location>
        <position position="228"/>
    </location>
</feature>
<feature type="modified residue" description="N6-(pyridoxal phosphate)lysine" evidence="1">
    <location>
        <position position="229"/>
    </location>
</feature>
<dbReference type="EC" id="2.1.2.1" evidence="1"/>
<dbReference type="EMBL" id="CP000542">
    <property type="protein sequence ID" value="ABM59951.1"/>
    <property type="status" value="ALT_INIT"/>
    <property type="molecule type" value="Genomic_DNA"/>
</dbReference>
<dbReference type="RefSeq" id="WP_041950231.1">
    <property type="nucleotide sequence ID" value="NC_008786.1"/>
</dbReference>
<dbReference type="SMR" id="A1WQP4"/>
<dbReference type="STRING" id="391735.Veis_4246"/>
<dbReference type="GeneID" id="76462572"/>
<dbReference type="KEGG" id="vei:Veis_4246"/>
<dbReference type="eggNOG" id="COG0112">
    <property type="taxonomic scope" value="Bacteria"/>
</dbReference>
<dbReference type="HOGENOM" id="CLU_022477_2_1_4"/>
<dbReference type="OrthoDB" id="9803846at2"/>
<dbReference type="UniPathway" id="UPA00193"/>
<dbReference type="UniPathway" id="UPA00288">
    <property type="reaction ID" value="UER01023"/>
</dbReference>
<dbReference type="Proteomes" id="UP000000374">
    <property type="component" value="Chromosome"/>
</dbReference>
<dbReference type="GO" id="GO:0005829">
    <property type="term" value="C:cytosol"/>
    <property type="evidence" value="ECO:0007669"/>
    <property type="project" value="TreeGrafter"/>
</dbReference>
<dbReference type="GO" id="GO:0004372">
    <property type="term" value="F:glycine hydroxymethyltransferase activity"/>
    <property type="evidence" value="ECO:0007669"/>
    <property type="project" value="UniProtKB-UniRule"/>
</dbReference>
<dbReference type="GO" id="GO:0030170">
    <property type="term" value="F:pyridoxal phosphate binding"/>
    <property type="evidence" value="ECO:0007669"/>
    <property type="project" value="UniProtKB-UniRule"/>
</dbReference>
<dbReference type="GO" id="GO:0019264">
    <property type="term" value="P:glycine biosynthetic process from serine"/>
    <property type="evidence" value="ECO:0007669"/>
    <property type="project" value="UniProtKB-UniRule"/>
</dbReference>
<dbReference type="GO" id="GO:0035999">
    <property type="term" value="P:tetrahydrofolate interconversion"/>
    <property type="evidence" value="ECO:0007669"/>
    <property type="project" value="UniProtKB-UniRule"/>
</dbReference>
<dbReference type="CDD" id="cd00378">
    <property type="entry name" value="SHMT"/>
    <property type="match status" value="1"/>
</dbReference>
<dbReference type="FunFam" id="3.40.640.10:FF:000001">
    <property type="entry name" value="Serine hydroxymethyltransferase"/>
    <property type="match status" value="1"/>
</dbReference>
<dbReference type="FunFam" id="3.90.1150.10:FF:000003">
    <property type="entry name" value="Serine hydroxymethyltransferase"/>
    <property type="match status" value="1"/>
</dbReference>
<dbReference type="Gene3D" id="3.90.1150.10">
    <property type="entry name" value="Aspartate Aminotransferase, domain 1"/>
    <property type="match status" value="1"/>
</dbReference>
<dbReference type="Gene3D" id="3.40.640.10">
    <property type="entry name" value="Type I PLP-dependent aspartate aminotransferase-like (Major domain)"/>
    <property type="match status" value="1"/>
</dbReference>
<dbReference type="HAMAP" id="MF_00051">
    <property type="entry name" value="SHMT"/>
    <property type="match status" value="1"/>
</dbReference>
<dbReference type="InterPro" id="IPR015424">
    <property type="entry name" value="PyrdxlP-dep_Trfase"/>
</dbReference>
<dbReference type="InterPro" id="IPR015421">
    <property type="entry name" value="PyrdxlP-dep_Trfase_major"/>
</dbReference>
<dbReference type="InterPro" id="IPR015422">
    <property type="entry name" value="PyrdxlP-dep_Trfase_small"/>
</dbReference>
<dbReference type="InterPro" id="IPR001085">
    <property type="entry name" value="Ser_HO-MeTrfase"/>
</dbReference>
<dbReference type="InterPro" id="IPR049943">
    <property type="entry name" value="Ser_HO-MeTrfase-like"/>
</dbReference>
<dbReference type="InterPro" id="IPR019798">
    <property type="entry name" value="Ser_HO-MeTrfase_PLP_BS"/>
</dbReference>
<dbReference type="InterPro" id="IPR039429">
    <property type="entry name" value="SHMT-like_dom"/>
</dbReference>
<dbReference type="NCBIfam" id="NF000586">
    <property type="entry name" value="PRK00011.1"/>
    <property type="match status" value="1"/>
</dbReference>
<dbReference type="PANTHER" id="PTHR11680">
    <property type="entry name" value="SERINE HYDROXYMETHYLTRANSFERASE"/>
    <property type="match status" value="1"/>
</dbReference>
<dbReference type="PANTHER" id="PTHR11680:SF50">
    <property type="entry name" value="SERINE HYDROXYMETHYLTRANSFERASE"/>
    <property type="match status" value="1"/>
</dbReference>
<dbReference type="Pfam" id="PF00464">
    <property type="entry name" value="SHMT"/>
    <property type="match status" value="1"/>
</dbReference>
<dbReference type="PIRSF" id="PIRSF000412">
    <property type="entry name" value="SHMT"/>
    <property type="match status" value="1"/>
</dbReference>
<dbReference type="SUPFAM" id="SSF53383">
    <property type="entry name" value="PLP-dependent transferases"/>
    <property type="match status" value="1"/>
</dbReference>
<dbReference type="PROSITE" id="PS00096">
    <property type="entry name" value="SHMT"/>
    <property type="match status" value="1"/>
</dbReference>
<reference key="1">
    <citation type="submission" date="2006-12" db="EMBL/GenBank/DDBJ databases">
        <title>Complete sequence of chromosome 1 of Verminephrobacter eiseniae EF01-2.</title>
        <authorList>
            <person name="Copeland A."/>
            <person name="Lucas S."/>
            <person name="Lapidus A."/>
            <person name="Barry K."/>
            <person name="Detter J.C."/>
            <person name="Glavina del Rio T."/>
            <person name="Dalin E."/>
            <person name="Tice H."/>
            <person name="Pitluck S."/>
            <person name="Chertkov O."/>
            <person name="Brettin T."/>
            <person name="Bruce D."/>
            <person name="Han C."/>
            <person name="Tapia R."/>
            <person name="Gilna P."/>
            <person name="Schmutz J."/>
            <person name="Larimer F."/>
            <person name="Land M."/>
            <person name="Hauser L."/>
            <person name="Kyrpides N."/>
            <person name="Kim E."/>
            <person name="Stahl D."/>
            <person name="Richardson P."/>
        </authorList>
    </citation>
    <scope>NUCLEOTIDE SEQUENCE [LARGE SCALE GENOMIC DNA]</scope>
    <source>
        <strain>EF01-2</strain>
    </source>
</reference>
<accession>A1WQP4</accession>
<evidence type="ECO:0000255" key="1">
    <source>
        <dbReference type="HAMAP-Rule" id="MF_00051"/>
    </source>
</evidence>
<evidence type="ECO:0000305" key="2"/>
<comment type="function">
    <text evidence="1">Catalyzes the reversible interconversion of serine and glycine with tetrahydrofolate (THF) serving as the one-carbon carrier. This reaction serves as the major source of one-carbon groups required for the biosynthesis of purines, thymidylate, methionine, and other important biomolecules. Also exhibits THF-independent aldolase activity toward beta-hydroxyamino acids, producing glycine and aldehydes, via a retro-aldol mechanism.</text>
</comment>
<comment type="catalytic activity">
    <reaction evidence="1">
        <text>(6R)-5,10-methylene-5,6,7,8-tetrahydrofolate + glycine + H2O = (6S)-5,6,7,8-tetrahydrofolate + L-serine</text>
        <dbReference type="Rhea" id="RHEA:15481"/>
        <dbReference type="ChEBI" id="CHEBI:15377"/>
        <dbReference type="ChEBI" id="CHEBI:15636"/>
        <dbReference type="ChEBI" id="CHEBI:33384"/>
        <dbReference type="ChEBI" id="CHEBI:57305"/>
        <dbReference type="ChEBI" id="CHEBI:57453"/>
        <dbReference type="EC" id="2.1.2.1"/>
    </reaction>
</comment>
<comment type="cofactor">
    <cofactor evidence="1">
        <name>pyridoxal 5'-phosphate</name>
        <dbReference type="ChEBI" id="CHEBI:597326"/>
    </cofactor>
</comment>
<comment type="pathway">
    <text evidence="1">One-carbon metabolism; tetrahydrofolate interconversion.</text>
</comment>
<comment type="pathway">
    <text evidence="1">Amino-acid biosynthesis; glycine biosynthesis; glycine from L-serine: step 1/1.</text>
</comment>
<comment type="subunit">
    <text evidence="1">Homodimer.</text>
</comment>
<comment type="subcellular location">
    <subcellularLocation>
        <location evidence="1">Cytoplasm</location>
    </subcellularLocation>
</comment>
<comment type="similarity">
    <text evidence="1">Belongs to the SHMT family.</text>
</comment>
<comment type="sequence caution" evidence="2">
    <conflict type="erroneous initiation">
        <sequence resource="EMBL-CDS" id="ABM59951"/>
    </conflict>
</comment>